<protein>
    <recommendedName>
        <fullName evidence="1">DET1- and DDB1-associated protein 1</fullName>
    </recommendedName>
</protein>
<organism>
    <name type="scientific">Bos taurus</name>
    <name type="common">Bovine</name>
    <dbReference type="NCBI Taxonomy" id="9913"/>
    <lineage>
        <taxon>Eukaryota</taxon>
        <taxon>Metazoa</taxon>
        <taxon>Chordata</taxon>
        <taxon>Craniata</taxon>
        <taxon>Vertebrata</taxon>
        <taxon>Euteleostomi</taxon>
        <taxon>Mammalia</taxon>
        <taxon>Eutheria</taxon>
        <taxon>Laurasiatheria</taxon>
        <taxon>Artiodactyla</taxon>
        <taxon>Ruminantia</taxon>
        <taxon>Pecora</taxon>
        <taxon>Bovidae</taxon>
        <taxon>Bovinae</taxon>
        <taxon>Bos</taxon>
    </lineage>
</organism>
<proteinExistence type="inferred from homology"/>
<reference key="1">
    <citation type="journal article" date="2005" name="BMC Genomics">
        <title>Characterization of 954 bovine full-CDS cDNA sequences.</title>
        <authorList>
            <person name="Harhay G.P."/>
            <person name="Sonstegard T.S."/>
            <person name="Keele J.W."/>
            <person name="Heaton M.P."/>
            <person name="Clawson M.L."/>
            <person name="Snelling W.M."/>
            <person name="Wiedmann R.T."/>
            <person name="Van Tassell C.P."/>
            <person name="Smith T.P.L."/>
        </authorList>
    </citation>
    <scope>NUCLEOTIDE SEQUENCE [LARGE SCALE MRNA]</scope>
</reference>
<reference key="2">
    <citation type="submission" date="2006-08" db="EMBL/GenBank/DDBJ databases">
        <authorList>
            <consortium name="NIH - Mammalian Gene Collection (MGC) project"/>
        </authorList>
    </citation>
    <scope>NUCLEOTIDE SEQUENCE [LARGE SCALE MRNA]</scope>
    <source>
        <strain>Hereford</strain>
        <tissue>Brain cortex</tissue>
    </source>
</reference>
<name>DDA1_BOVIN</name>
<gene>
    <name evidence="1" type="primary">DDA1</name>
</gene>
<sequence>MADFLKGLPVYNKSNFSRFHADSVCKASNRRPSVYLPTREYPSEQIIVTEKTNILLRYLHQQWDKKNAAKKRDQEQVELEGESSAPPRKVARTDSPDMHEDT</sequence>
<keyword id="KW-0007">Acetylation</keyword>
<keyword id="KW-0597">Phosphoprotein</keyword>
<keyword id="KW-1185">Reference proteome</keyword>
<keyword id="KW-0833">Ubl conjugation pathway</keyword>
<accession>Q5E9A9</accession>
<dbReference type="EMBL" id="BT021011">
    <property type="protein sequence ID" value="AAX09028.1"/>
    <property type="molecule type" value="mRNA"/>
</dbReference>
<dbReference type="EMBL" id="BC120366">
    <property type="protein sequence ID" value="AAI20367.1"/>
    <property type="molecule type" value="mRNA"/>
</dbReference>
<dbReference type="RefSeq" id="NP_001015583.1">
    <property type="nucleotide sequence ID" value="NM_001015583.1"/>
</dbReference>
<dbReference type="SMR" id="Q5E9A9"/>
<dbReference type="FunCoup" id="Q5E9A9">
    <property type="interactions" value="2927"/>
</dbReference>
<dbReference type="STRING" id="9913.ENSBTAP00000022696"/>
<dbReference type="PaxDb" id="9913-ENSBTAP00000022696"/>
<dbReference type="Ensembl" id="ENSBTAT00000022696.2">
    <property type="protein sequence ID" value="ENSBTAP00000022696.1"/>
    <property type="gene ID" value="ENSBTAG00000017068.2"/>
</dbReference>
<dbReference type="GeneID" id="512898"/>
<dbReference type="KEGG" id="bta:512898"/>
<dbReference type="CTD" id="79016"/>
<dbReference type="VEuPathDB" id="HostDB:ENSBTAG00000017068"/>
<dbReference type="eggNOG" id="KOG4816">
    <property type="taxonomic scope" value="Eukaryota"/>
</dbReference>
<dbReference type="GeneTree" id="ENSGT00390000007029"/>
<dbReference type="HOGENOM" id="CLU_144562_1_0_1"/>
<dbReference type="InParanoid" id="Q5E9A9"/>
<dbReference type="OMA" id="HANCLCK"/>
<dbReference type="OrthoDB" id="8598182at2759"/>
<dbReference type="TreeFam" id="TF323534"/>
<dbReference type="Reactome" id="R-BTA-8951664">
    <property type="pathway name" value="Neddylation"/>
</dbReference>
<dbReference type="UniPathway" id="UPA00143"/>
<dbReference type="Proteomes" id="UP000009136">
    <property type="component" value="Chromosome 7"/>
</dbReference>
<dbReference type="Bgee" id="ENSBTAG00000017068">
    <property type="expression patterns" value="Expressed in temporal cortex and 105 other cell types or tissues"/>
</dbReference>
<dbReference type="GO" id="GO:0080008">
    <property type="term" value="C:Cul4-RING E3 ubiquitin ligase complex"/>
    <property type="evidence" value="ECO:0000250"/>
    <property type="project" value="UniProtKB"/>
</dbReference>
<dbReference type="GO" id="GO:0032436">
    <property type="term" value="P:positive regulation of proteasomal ubiquitin-dependent protein catabolic process"/>
    <property type="evidence" value="ECO:0000318"/>
    <property type="project" value="GO_Central"/>
</dbReference>
<dbReference type="GO" id="GO:0000209">
    <property type="term" value="P:protein polyubiquitination"/>
    <property type="evidence" value="ECO:0000250"/>
    <property type="project" value="UniProtKB"/>
</dbReference>
<dbReference type="InterPro" id="IPR033575">
    <property type="entry name" value="DDA1-like"/>
</dbReference>
<dbReference type="InterPro" id="IPR018276">
    <property type="entry name" value="DDA1_dom"/>
</dbReference>
<dbReference type="PANTHER" id="PTHR31879">
    <property type="entry name" value="DET1- AND DDB1-ASSOCIATED PROTEIN 1"/>
    <property type="match status" value="1"/>
</dbReference>
<dbReference type="PANTHER" id="PTHR31879:SF2">
    <property type="entry name" value="DET1- AND DDB1-ASSOCIATED PROTEIN 1"/>
    <property type="match status" value="1"/>
</dbReference>
<dbReference type="Pfam" id="PF10172">
    <property type="entry name" value="DDA1"/>
    <property type="match status" value="1"/>
</dbReference>
<feature type="initiator methionine" description="Removed" evidence="1">
    <location>
        <position position="1"/>
    </location>
</feature>
<feature type="chain" id="PRO_0000310269" description="DET1- and DDB1-associated protein 1">
    <location>
        <begin position="2"/>
        <end position="102"/>
    </location>
</feature>
<feature type="region of interest" description="Disordered" evidence="2">
    <location>
        <begin position="66"/>
        <end position="102"/>
    </location>
</feature>
<feature type="compositionally biased region" description="Basic and acidic residues" evidence="2">
    <location>
        <begin position="66"/>
        <end position="75"/>
    </location>
</feature>
<feature type="compositionally biased region" description="Basic and acidic residues" evidence="2">
    <location>
        <begin position="91"/>
        <end position="102"/>
    </location>
</feature>
<feature type="modified residue" description="N-acetylalanine" evidence="1">
    <location>
        <position position="2"/>
    </location>
</feature>
<feature type="modified residue" description="Phosphoserine" evidence="1">
    <location>
        <position position="33"/>
    </location>
</feature>
<feature type="modified residue" description="Phosphoserine" evidence="1">
    <location>
        <position position="95"/>
    </location>
</feature>
<comment type="function">
    <text evidence="1">Functions as a component of numerous distinct DCX (DDB1-CUL4-X-box) E3 ubiquitin-protein ligase complexes which mediate the ubiquitination and subsequent proteasomal degradation of target proteins. In the DCX complexes, acts as a scaffolding subunit required to stabilize the complex.</text>
</comment>
<comment type="pathway">
    <text evidence="1">Protein modification; protein ubiquitination.</text>
</comment>
<comment type="subunit">
    <text evidence="1">Component of numerous DCX (DDB1-CUL4-X-box) E3 ubiquitin-protein ligase complexes which consist of a core of DDB1, cullin-4 (CUL4A or CUL4B), DDA1 and RBX1. Component of the DCX(DCAF15) complex, also named CLR4(DCAF15) complex, composed of DCAF15, DDB1, cullin-4 (CUL4A or CUL4B), DDA1 and RBX1. Part of the DDD core complex containing DET1, DDA1 and DDB1; the DDD core complex recruits a specific UBE2E enzyme, such as UBE2E1, UBE2E2 UBE2E3, to form specific DDD-E2 complexes.</text>
</comment>
<comment type="similarity">
    <text evidence="3">Belongs to the DDA1 family.</text>
</comment>
<evidence type="ECO:0000250" key="1">
    <source>
        <dbReference type="UniProtKB" id="Q9BW61"/>
    </source>
</evidence>
<evidence type="ECO:0000256" key="2">
    <source>
        <dbReference type="SAM" id="MobiDB-lite"/>
    </source>
</evidence>
<evidence type="ECO:0000305" key="3"/>